<keyword id="KW-1003">Cell membrane</keyword>
<keyword id="KW-0903">Direct protein sequencing</keyword>
<keyword id="KW-0967">Endosome</keyword>
<keyword id="KW-0472">Membrane</keyword>
<keyword id="KW-0597">Phosphoprotein</keyword>
<keyword id="KW-1185">Reference proteome</keyword>
<proteinExistence type="evidence at protein level"/>
<gene>
    <name type="primary">Flot1</name>
</gene>
<sequence>MFFTCGPNEAMVVSGFCRSPPVMVAGGRVFVLPCIQQIQRISLNTLTLNVKSEKVYTRHGVPISVTGIAQVKIQGQNKEMLAAACQMFLGKTEAEIAHIALETLEGHQRAIMAHMTVEEIYKDRQKFSEQVFKVASSDLVNMGISVVSYTLKDIHDDQDYLHSLGKARTAQVQKDARIGEAEAKRDAGIREAKAKQEKVSAQCLSEIEMAKAQRDYELKKATYDIEVNTRRAQADLAYQLQVAKTKQQIEEQRVQVQVVERAQQVAVQEQEIARREKELEARVRKPAEAERYRLERLAEAEKAQLIMQAEAEAESVRMRGEAEAFAIGARARAEAEQMAKKAEAFQMYQEAAQLDMLLEKLPQVAEEISGPLTSANKITLVSSGSGTMGAAKVTGEVLDILSRLPESVERLTGVSISQVNHNKPLRTA</sequence>
<organism>
    <name type="scientific">Mus musculus</name>
    <name type="common">Mouse</name>
    <dbReference type="NCBI Taxonomy" id="10090"/>
    <lineage>
        <taxon>Eukaryota</taxon>
        <taxon>Metazoa</taxon>
        <taxon>Chordata</taxon>
        <taxon>Craniata</taxon>
        <taxon>Vertebrata</taxon>
        <taxon>Euteleostomi</taxon>
        <taxon>Mammalia</taxon>
        <taxon>Eutheria</taxon>
        <taxon>Euarchontoglires</taxon>
        <taxon>Glires</taxon>
        <taxon>Rodentia</taxon>
        <taxon>Myomorpha</taxon>
        <taxon>Muroidea</taxon>
        <taxon>Muridae</taxon>
        <taxon>Murinae</taxon>
        <taxon>Mus</taxon>
        <taxon>Mus</taxon>
    </lineage>
</organism>
<feature type="chain" id="PRO_0000094045" description="Flotillin-1">
    <location>
        <begin position="1"/>
        <end position="428"/>
    </location>
</feature>
<feature type="modified residue" description="Phosphoserine" evidence="2">
    <location>
        <position position="19"/>
    </location>
</feature>
<feature type="modified residue" description="Phosphoserine" evidence="2">
    <location>
        <position position="163"/>
    </location>
</feature>
<feature type="modified residue" description="Phosphoserine" evidence="2">
    <location>
        <position position="385"/>
    </location>
</feature>
<feature type="modified residue" description="Phosphothreonine" evidence="2">
    <location>
        <position position="387"/>
    </location>
</feature>
<dbReference type="EMBL" id="U90435">
    <property type="protein sequence ID" value="AAB58583.1"/>
    <property type="molecule type" value="mRNA"/>
</dbReference>
<dbReference type="EMBL" id="AF145044">
    <property type="protein sequence ID" value="AAD33945.1"/>
    <property type="molecule type" value="mRNA"/>
</dbReference>
<dbReference type="EMBL" id="BC004647">
    <property type="protein sequence ID" value="AAH04647.1"/>
    <property type="molecule type" value="mRNA"/>
</dbReference>
<dbReference type="CCDS" id="CCDS28705.1"/>
<dbReference type="RefSeq" id="NP_001397042.1">
    <property type="nucleotide sequence ID" value="NM_001410113.1"/>
</dbReference>
<dbReference type="RefSeq" id="NP_001397043.1">
    <property type="nucleotide sequence ID" value="NM_001410114.1"/>
</dbReference>
<dbReference type="RefSeq" id="NP_001397044.1">
    <property type="nucleotide sequence ID" value="NM_001410115.1"/>
</dbReference>
<dbReference type="RefSeq" id="NP_001397045.1">
    <property type="nucleotide sequence ID" value="NM_001410116.1"/>
</dbReference>
<dbReference type="RefSeq" id="NP_032053.1">
    <property type="nucleotide sequence ID" value="NM_008027.3"/>
</dbReference>
<dbReference type="RefSeq" id="XP_006523719.1">
    <property type="nucleotide sequence ID" value="XM_006523656.3"/>
</dbReference>
<dbReference type="SMR" id="O08917"/>
<dbReference type="BioGRID" id="199704">
    <property type="interactions" value="75"/>
</dbReference>
<dbReference type="FunCoup" id="O08917">
    <property type="interactions" value="410"/>
</dbReference>
<dbReference type="IntAct" id="O08917">
    <property type="interactions" value="65"/>
</dbReference>
<dbReference type="MINT" id="O08917"/>
<dbReference type="STRING" id="10090.ENSMUSP00000001569"/>
<dbReference type="GlyGen" id="O08917">
    <property type="glycosylation" value="1 site, 1 O-linked glycan (1 site)"/>
</dbReference>
<dbReference type="iPTMnet" id="O08917"/>
<dbReference type="PhosphoSitePlus" id="O08917"/>
<dbReference type="SwissPalm" id="O08917"/>
<dbReference type="jPOST" id="O08917"/>
<dbReference type="PaxDb" id="10090-ENSMUSP00000001569"/>
<dbReference type="PeptideAtlas" id="O08917"/>
<dbReference type="ProteomicsDB" id="267598"/>
<dbReference type="Pumba" id="O08917"/>
<dbReference type="Antibodypedia" id="655">
    <property type="antibodies" value="423 antibodies from 38 providers"/>
</dbReference>
<dbReference type="DNASU" id="14251"/>
<dbReference type="Ensembl" id="ENSMUST00000001569.15">
    <property type="protein sequence ID" value="ENSMUSP00000001569.9"/>
    <property type="gene ID" value="ENSMUSG00000059714.14"/>
</dbReference>
<dbReference type="GeneID" id="14251"/>
<dbReference type="KEGG" id="mmu:14251"/>
<dbReference type="UCSC" id="uc008cip.1">
    <property type="organism name" value="mouse"/>
</dbReference>
<dbReference type="AGR" id="MGI:1100500"/>
<dbReference type="CTD" id="10211"/>
<dbReference type="MGI" id="MGI:1100500">
    <property type="gene designation" value="Flot1"/>
</dbReference>
<dbReference type="VEuPathDB" id="HostDB:ENSMUSG00000059714"/>
<dbReference type="eggNOG" id="KOG2668">
    <property type="taxonomic scope" value="Eukaryota"/>
</dbReference>
<dbReference type="GeneTree" id="ENSGT00560000077232"/>
<dbReference type="HOGENOM" id="CLU_038134_1_0_1"/>
<dbReference type="InParanoid" id="O08917"/>
<dbReference type="OMA" id="AFQIQDI"/>
<dbReference type="OrthoDB" id="6080404at2759"/>
<dbReference type="PhylomeDB" id="O08917"/>
<dbReference type="TreeFam" id="TF324879"/>
<dbReference type="Reactome" id="R-MMU-5213460">
    <property type="pathway name" value="RIPK1-mediated regulated necrosis"/>
</dbReference>
<dbReference type="Reactome" id="R-MMU-5675482">
    <property type="pathway name" value="Regulation of necroptotic cell death"/>
</dbReference>
<dbReference type="Reactome" id="R-MMU-8849932">
    <property type="pathway name" value="Synaptic adhesion-like molecules"/>
</dbReference>
<dbReference type="Reactome" id="R-MMU-8980692">
    <property type="pathway name" value="RHOA GTPase cycle"/>
</dbReference>
<dbReference type="Reactome" id="R-MMU-9013026">
    <property type="pathway name" value="RHOB GTPase cycle"/>
</dbReference>
<dbReference type="Reactome" id="R-MMU-9013106">
    <property type="pathway name" value="RHOC GTPase cycle"/>
</dbReference>
<dbReference type="BioGRID-ORCS" id="14251">
    <property type="hits" value="5 hits in 83 CRISPR screens"/>
</dbReference>
<dbReference type="CD-CODE" id="CE726F99">
    <property type="entry name" value="Postsynaptic density"/>
</dbReference>
<dbReference type="PRO" id="PR:O08917"/>
<dbReference type="Proteomes" id="UP000000589">
    <property type="component" value="Chromosome 17"/>
</dbReference>
<dbReference type="RNAct" id="O08917">
    <property type="molecule type" value="protein"/>
</dbReference>
<dbReference type="Bgee" id="ENSMUSG00000059714">
    <property type="expression patterns" value="Expressed in granulocyte and 284 other cell types or tissues"/>
</dbReference>
<dbReference type="ExpressionAtlas" id="O08917">
    <property type="expression patterns" value="baseline and differential"/>
</dbReference>
<dbReference type="GO" id="GO:0005912">
    <property type="term" value="C:adherens junction"/>
    <property type="evidence" value="ECO:0007669"/>
    <property type="project" value="Ensembl"/>
</dbReference>
<dbReference type="GO" id="GO:0016323">
    <property type="term" value="C:basolateral plasma membrane"/>
    <property type="evidence" value="ECO:0007669"/>
    <property type="project" value="Ensembl"/>
</dbReference>
<dbReference type="GO" id="GO:0005901">
    <property type="term" value="C:caveola"/>
    <property type="evidence" value="ECO:0000314"/>
    <property type="project" value="MGI"/>
</dbReference>
<dbReference type="GO" id="GO:0044291">
    <property type="term" value="C:cell-cell contact zone"/>
    <property type="evidence" value="ECO:0007669"/>
    <property type="project" value="Ensembl"/>
</dbReference>
<dbReference type="GO" id="GO:0034451">
    <property type="term" value="C:centriolar satellite"/>
    <property type="evidence" value="ECO:0007669"/>
    <property type="project" value="Ensembl"/>
</dbReference>
<dbReference type="GO" id="GO:0008180">
    <property type="term" value="C:COP9 signalosome"/>
    <property type="evidence" value="ECO:0007669"/>
    <property type="project" value="Ensembl"/>
</dbReference>
<dbReference type="GO" id="GO:0030864">
    <property type="term" value="C:cortical actin cytoskeleton"/>
    <property type="evidence" value="ECO:0007669"/>
    <property type="project" value="Ensembl"/>
</dbReference>
<dbReference type="GO" id="GO:0098691">
    <property type="term" value="C:dopaminergic synapse"/>
    <property type="evidence" value="ECO:0007669"/>
    <property type="project" value="Ensembl"/>
</dbReference>
<dbReference type="GO" id="GO:0005769">
    <property type="term" value="C:early endosome"/>
    <property type="evidence" value="ECO:0007669"/>
    <property type="project" value="Ensembl"/>
</dbReference>
<dbReference type="GO" id="GO:0005768">
    <property type="term" value="C:endosome"/>
    <property type="evidence" value="ECO:0000250"/>
    <property type="project" value="UniProtKB"/>
</dbReference>
<dbReference type="GO" id="GO:0009897">
    <property type="term" value="C:external side of plasma membrane"/>
    <property type="evidence" value="ECO:0000314"/>
    <property type="project" value="MGI"/>
</dbReference>
<dbReference type="GO" id="GO:0016600">
    <property type="term" value="C:flotillin complex"/>
    <property type="evidence" value="ECO:0000314"/>
    <property type="project" value="UniProtKB"/>
</dbReference>
<dbReference type="GO" id="GO:0098982">
    <property type="term" value="C:GABA-ergic synapse"/>
    <property type="evidence" value="ECO:0007669"/>
    <property type="project" value="Ensembl"/>
</dbReference>
<dbReference type="GO" id="GO:0098978">
    <property type="term" value="C:glutamatergic synapse"/>
    <property type="evidence" value="ECO:0007669"/>
    <property type="project" value="Ensembl"/>
</dbReference>
<dbReference type="GO" id="GO:0030027">
    <property type="term" value="C:lamellipodium"/>
    <property type="evidence" value="ECO:0007669"/>
    <property type="project" value="Ensembl"/>
</dbReference>
<dbReference type="GO" id="GO:0042470">
    <property type="term" value="C:melanosome"/>
    <property type="evidence" value="ECO:0007669"/>
    <property type="project" value="UniProtKB-SubCell"/>
</dbReference>
<dbReference type="GO" id="GO:0016020">
    <property type="term" value="C:membrane"/>
    <property type="evidence" value="ECO:0000314"/>
    <property type="project" value="MGI"/>
</dbReference>
<dbReference type="GO" id="GO:0045121">
    <property type="term" value="C:membrane raft"/>
    <property type="evidence" value="ECO:0000314"/>
    <property type="project" value="MGI"/>
</dbReference>
<dbReference type="GO" id="GO:0005886">
    <property type="term" value="C:plasma membrane"/>
    <property type="evidence" value="ECO:0000314"/>
    <property type="project" value="MGI"/>
</dbReference>
<dbReference type="GO" id="GO:0044853">
    <property type="term" value="C:plasma membrane raft"/>
    <property type="evidence" value="ECO:0000314"/>
    <property type="project" value="UniProtKB"/>
</dbReference>
<dbReference type="GO" id="GO:0048786">
    <property type="term" value="C:presynaptic active zone"/>
    <property type="evidence" value="ECO:0007669"/>
    <property type="project" value="Ensembl"/>
</dbReference>
<dbReference type="GO" id="GO:0042383">
    <property type="term" value="C:sarcolemma"/>
    <property type="evidence" value="ECO:0000314"/>
    <property type="project" value="MGI"/>
</dbReference>
<dbReference type="GO" id="GO:0001931">
    <property type="term" value="C:uropod"/>
    <property type="evidence" value="ECO:0007669"/>
    <property type="project" value="Ensembl"/>
</dbReference>
<dbReference type="GO" id="GO:0035255">
    <property type="term" value="F:ionotropic glutamate receptor binding"/>
    <property type="evidence" value="ECO:0007669"/>
    <property type="project" value="Ensembl"/>
</dbReference>
<dbReference type="GO" id="GO:0002020">
    <property type="term" value="F:protease binding"/>
    <property type="evidence" value="ECO:0007669"/>
    <property type="project" value="Ensembl"/>
</dbReference>
<dbReference type="GO" id="GO:0007411">
    <property type="term" value="P:axon guidance"/>
    <property type="evidence" value="ECO:0000266"/>
    <property type="project" value="MGI"/>
</dbReference>
<dbReference type="GO" id="GO:0007409">
    <property type="term" value="P:axonogenesis"/>
    <property type="evidence" value="ECO:0000315"/>
    <property type="project" value="MGI"/>
</dbReference>
<dbReference type="GO" id="GO:0071360">
    <property type="term" value="P:cellular response to exogenous dsRNA"/>
    <property type="evidence" value="ECO:0007669"/>
    <property type="project" value="Ensembl"/>
</dbReference>
<dbReference type="GO" id="GO:0033227">
    <property type="term" value="P:dsRNA transport"/>
    <property type="evidence" value="ECO:0007669"/>
    <property type="project" value="Ensembl"/>
</dbReference>
<dbReference type="GO" id="GO:0006897">
    <property type="term" value="P:endocytosis"/>
    <property type="evidence" value="ECO:0000266"/>
    <property type="project" value="MGI"/>
</dbReference>
<dbReference type="GO" id="GO:0022617">
    <property type="term" value="P:extracellular matrix disassembly"/>
    <property type="evidence" value="ECO:0007669"/>
    <property type="project" value="Ensembl"/>
</dbReference>
<dbReference type="GO" id="GO:0035556">
    <property type="term" value="P:intracellular signal transduction"/>
    <property type="evidence" value="ECO:0000315"/>
    <property type="project" value="UniProtKB"/>
</dbReference>
<dbReference type="GO" id="GO:0044854">
    <property type="term" value="P:plasma membrane raft assembly"/>
    <property type="evidence" value="ECO:0007669"/>
    <property type="project" value="Ensembl"/>
</dbReference>
<dbReference type="GO" id="GO:0043123">
    <property type="term" value="P:positive regulation of canonical NF-kappaB signal transduction"/>
    <property type="evidence" value="ECO:0007669"/>
    <property type="project" value="Ensembl"/>
</dbReference>
<dbReference type="GO" id="GO:1901890">
    <property type="term" value="P:positive regulation of cell junction assembly"/>
    <property type="evidence" value="ECO:0000315"/>
    <property type="project" value="UniProtKB"/>
</dbReference>
<dbReference type="GO" id="GO:2000049">
    <property type="term" value="P:positive regulation of cell-cell adhesion mediated by cadherin"/>
    <property type="evidence" value="ECO:0000315"/>
    <property type="project" value="UniProtKB"/>
</dbReference>
<dbReference type="GO" id="GO:0045807">
    <property type="term" value="P:positive regulation of endocytosis"/>
    <property type="evidence" value="ECO:0000315"/>
    <property type="project" value="UniProtKB"/>
</dbReference>
<dbReference type="GO" id="GO:0034116">
    <property type="term" value="P:positive regulation of heterotypic cell-cell adhesion"/>
    <property type="evidence" value="ECO:0007669"/>
    <property type="project" value="Ensembl"/>
</dbReference>
<dbReference type="GO" id="GO:0032728">
    <property type="term" value="P:positive regulation of interferon-beta production"/>
    <property type="evidence" value="ECO:0007669"/>
    <property type="project" value="Ensembl"/>
</dbReference>
<dbReference type="GO" id="GO:1901741">
    <property type="term" value="P:positive regulation of myoblast fusion"/>
    <property type="evidence" value="ECO:0000315"/>
    <property type="project" value="UniProtKB"/>
</dbReference>
<dbReference type="GO" id="GO:0032092">
    <property type="term" value="P:positive regulation of protein binding"/>
    <property type="evidence" value="ECO:0000315"/>
    <property type="project" value="UniProtKB"/>
</dbReference>
<dbReference type="GO" id="GO:0048643">
    <property type="term" value="P:positive regulation of skeletal muscle tissue development"/>
    <property type="evidence" value="ECO:0000315"/>
    <property type="project" value="UniProtKB"/>
</dbReference>
<dbReference type="GO" id="GO:0032226">
    <property type="term" value="P:positive regulation of synaptic transmission, dopaminergic"/>
    <property type="evidence" value="ECO:0000315"/>
    <property type="project" value="UniProtKB"/>
</dbReference>
<dbReference type="GO" id="GO:0034141">
    <property type="term" value="P:positive regulation of toll-like receptor 3 signaling pathway"/>
    <property type="evidence" value="ECO:0007669"/>
    <property type="project" value="Ensembl"/>
</dbReference>
<dbReference type="GO" id="GO:0072659">
    <property type="term" value="P:protein localization to plasma membrane"/>
    <property type="evidence" value="ECO:0000315"/>
    <property type="project" value="UniProtKB"/>
</dbReference>
<dbReference type="GO" id="GO:0050821">
    <property type="term" value="P:protein stabilization"/>
    <property type="evidence" value="ECO:0007669"/>
    <property type="project" value="Ensembl"/>
</dbReference>
<dbReference type="GO" id="GO:0051580">
    <property type="term" value="P:regulation of neurotransmitter uptake"/>
    <property type="evidence" value="ECO:0007669"/>
    <property type="project" value="Ensembl"/>
</dbReference>
<dbReference type="GO" id="GO:0002090">
    <property type="term" value="P:regulation of receptor internalization"/>
    <property type="evidence" value="ECO:0000315"/>
    <property type="project" value="UniProtKB"/>
</dbReference>
<dbReference type="GO" id="GO:0035023">
    <property type="term" value="P:regulation of Rho protein signal transduction"/>
    <property type="evidence" value="ECO:0000315"/>
    <property type="project" value="MGI"/>
</dbReference>
<dbReference type="GO" id="GO:0034976">
    <property type="term" value="P:response to endoplasmic reticulum stress"/>
    <property type="evidence" value="ECO:0007669"/>
    <property type="project" value="Ensembl"/>
</dbReference>
<dbReference type="CDD" id="cd03399">
    <property type="entry name" value="SPFH_flotillin"/>
    <property type="match status" value="1"/>
</dbReference>
<dbReference type="FunFam" id="3.30.479.30:FF:000003">
    <property type="entry name" value="Flotillin 2"/>
    <property type="match status" value="1"/>
</dbReference>
<dbReference type="Gene3D" id="3.30.479.30">
    <property type="entry name" value="Band 7 domain"/>
    <property type="match status" value="1"/>
</dbReference>
<dbReference type="InterPro" id="IPR001107">
    <property type="entry name" value="Band_7"/>
</dbReference>
<dbReference type="InterPro" id="IPR036013">
    <property type="entry name" value="Band_7/SPFH_dom_sf"/>
</dbReference>
<dbReference type="InterPro" id="IPR031905">
    <property type="entry name" value="Flotillin_C"/>
</dbReference>
<dbReference type="InterPro" id="IPR027705">
    <property type="entry name" value="Flotillin_fam"/>
</dbReference>
<dbReference type="PANTHER" id="PTHR13806:SF46">
    <property type="entry name" value="FLOTILLIN-1-RELATED"/>
    <property type="match status" value="1"/>
</dbReference>
<dbReference type="PANTHER" id="PTHR13806">
    <property type="entry name" value="FLOTILLIN-RELATED"/>
    <property type="match status" value="1"/>
</dbReference>
<dbReference type="Pfam" id="PF01145">
    <property type="entry name" value="Band_7"/>
    <property type="match status" value="1"/>
</dbReference>
<dbReference type="Pfam" id="PF15975">
    <property type="entry name" value="Flot"/>
    <property type="match status" value="1"/>
</dbReference>
<dbReference type="SMART" id="SM00244">
    <property type="entry name" value="PHB"/>
    <property type="match status" value="1"/>
</dbReference>
<dbReference type="SUPFAM" id="SSF117892">
    <property type="entry name" value="Band 7/SPFH domain"/>
    <property type="match status" value="1"/>
</dbReference>
<protein>
    <recommendedName>
        <fullName>Flotillin-1</fullName>
    </recommendedName>
</protein>
<reference key="1">
    <citation type="journal article" date="1997" name="J. Biol. Chem.">
        <title>Flotillin and epidermal surface antigen define a new family of caveolae-associated integral membrane proteins.</title>
        <authorList>
            <person name="Bickel P.E."/>
            <person name="Scherer P.E."/>
            <person name="Schnitzer J.E."/>
            <person name="Oh P."/>
            <person name="Lisanti M.P."/>
            <person name="Lodish H.F."/>
        </authorList>
    </citation>
    <scope>NUCLEOTIDE SEQUENCE [MRNA]</scope>
    <scope>PROTEIN SEQUENCE OF 133-152; 220-240 AND 302-311</scope>
    <scope>CHARACTERIZATION</scope>
    <scope>SUBCELLULAR LOCATION</scope>
    <source>
        <tissue>Adipocyte</tissue>
        <tissue>Lung</tissue>
    </source>
</reference>
<reference key="2">
    <citation type="journal article" date="1999" name="J. Biol. Chem.">
        <title>Flotillins/cavatellins are differentially expressed in cells and tissues and form a hetero-oligomeric complex with caveolins in vivo. Characterization and epitope-mapping of a novel flotillin-1 monoclonal antibody probe.</title>
        <authorList>
            <person name="Volonte D."/>
            <person name="Galbiati F."/>
            <person name="Li S."/>
            <person name="Nishiyama K."/>
            <person name="Okamoto T."/>
            <person name="Lisanti M.P."/>
        </authorList>
    </citation>
    <scope>NUCLEOTIDE SEQUENCE [MRNA]</scope>
    <scope>SUBUNIT</scope>
</reference>
<reference key="3">
    <citation type="journal article" date="2004" name="Genome Res.">
        <title>The status, quality, and expansion of the NIH full-length cDNA project: the Mammalian Gene Collection (MGC).</title>
        <authorList>
            <consortium name="The MGC Project Team"/>
        </authorList>
    </citation>
    <scope>NUCLEOTIDE SEQUENCE [LARGE SCALE MRNA]</scope>
</reference>
<reference key="4">
    <citation type="journal article" date="2010" name="Cell">
        <title>A tissue-specific atlas of mouse protein phosphorylation and expression.</title>
        <authorList>
            <person name="Huttlin E.L."/>
            <person name="Jedrychowski M.P."/>
            <person name="Elias J.E."/>
            <person name="Goswami T."/>
            <person name="Rad R."/>
            <person name="Beausoleil S.A."/>
            <person name="Villen J."/>
            <person name="Haas W."/>
            <person name="Sowa M.E."/>
            <person name="Gygi S.P."/>
        </authorList>
    </citation>
    <scope>IDENTIFICATION BY MASS SPECTROMETRY [LARGE SCALE ANALYSIS]</scope>
    <source>
        <tissue>Brain</tissue>
        <tissue>Brown adipose tissue</tissue>
        <tissue>Heart</tissue>
        <tissue>Liver</tissue>
        <tissue>Lung</tissue>
        <tissue>Pancreas</tissue>
        <tissue>Spleen</tissue>
    </source>
</reference>
<evidence type="ECO:0000250" key="1"/>
<evidence type="ECO:0000250" key="2">
    <source>
        <dbReference type="UniProtKB" id="O75955"/>
    </source>
</evidence>
<evidence type="ECO:0000269" key="3">
    <source>
    </source>
</evidence>
<evidence type="ECO:0000305" key="4"/>
<name>FLOT1_MOUSE</name>
<accession>O08917</accession>
<comment type="function">
    <text>May act as a scaffolding protein within caveolar membranes, functionally participating in formation of caveolae or caveolae-like vesicles.</text>
</comment>
<comment type="subunit">
    <text evidence="1">Heterooligomeric complex of flotillin-1 and flotillin-2 and caveolin-1 and caveolin-2. Interacts with ECPAS (By similarity).</text>
</comment>
<comment type="subcellular location">
    <subcellularLocation>
        <location evidence="2">Cell membrane</location>
        <topology evidence="2">Peripheral membrane protein</topology>
    </subcellularLocation>
    <subcellularLocation>
        <location evidence="2">Endosome</location>
    </subcellularLocation>
    <subcellularLocation>
        <location evidence="3">Membrane</location>
        <location evidence="3">Caveola</location>
        <topology evidence="3">Peripheral membrane protein</topology>
    </subcellularLocation>
    <subcellularLocation>
        <location evidence="2">Melanosome</location>
    </subcellularLocation>
    <subcellularLocation>
        <location evidence="2">Membrane raft</location>
    </subcellularLocation>
    <text evidence="2 3">Identified by mass spectrometry in melanosome fractions from stage I to stage IV (By similarity). Membrane-associated protein of caveola (PubMed:9153235).</text>
</comment>
<comment type="tissue specificity">
    <text>High expression in brain, white adipose tissue, heart muscle, skeletal muscle and lung. Low expression in spleen, liver and testis.</text>
</comment>
<comment type="miscellaneous">
    <text>Expression increases at least 10-fold as 3T3-L1 cells differentiate into adipocytes.</text>
</comment>
<comment type="similarity">
    <text evidence="4">Belongs to the band 7/mec-2 family. Flotillin subfamily.</text>
</comment>